<evidence type="ECO:0000269" key="1">
    <source>
    </source>
</evidence>
<evidence type="ECO:0000305" key="2"/>
<evidence type="ECO:0007829" key="3">
    <source>
        <dbReference type="PDB" id="1DQI"/>
    </source>
</evidence>
<evidence type="ECO:0007829" key="4">
    <source>
        <dbReference type="PDB" id="1DQK"/>
    </source>
</evidence>
<organism>
    <name type="scientific">Pyrococcus furiosus (strain ATCC 43587 / DSM 3638 / JCM 8422 / Vc1)</name>
    <dbReference type="NCBI Taxonomy" id="186497"/>
    <lineage>
        <taxon>Archaea</taxon>
        <taxon>Methanobacteriati</taxon>
        <taxon>Methanobacteriota</taxon>
        <taxon>Thermococci</taxon>
        <taxon>Thermococcales</taxon>
        <taxon>Thermococcaceae</taxon>
        <taxon>Pyrococcus</taxon>
    </lineage>
</organism>
<protein>
    <recommendedName>
        <fullName>Superoxide reductase</fullName>
        <shortName>SOR</shortName>
        <ecNumber>1.15.1.2</ecNumber>
    </recommendedName>
</protein>
<comment type="function">
    <text evidence="1">Uses electrons from reduced NADP, by way of rubredoxin and an oxidoreductase, to catalyze the reduction of superoxide to hydrogen peroxide.</text>
</comment>
<comment type="catalytic activity">
    <reaction evidence="1">
        <text>reduced [rubredoxin] + superoxide + 2 H(+) = oxidized [rubredoxin] + H2O2</text>
        <dbReference type="Rhea" id="RHEA:21324"/>
        <dbReference type="Rhea" id="RHEA-COMP:10302"/>
        <dbReference type="Rhea" id="RHEA-COMP:10303"/>
        <dbReference type="ChEBI" id="CHEBI:15378"/>
        <dbReference type="ChEBI" id="CHEBI:16240"/>
        <dbReference type="ChEBI" id="CHEBI:18421"/>
        <dbReference type="ChEBI" id="CHEBI:29033"/>
        <dbReference type="ChEBI" id="CHEBI:29034"/>
        <dbReference type="EC" id="1.15.1.2"/>
    </reaction>
</comment>
<comment type="cofactor">
    <cofactor evidence="1">
        <name>Fe cation</name>
        <dbReference type="ChEBI" id="CHEBI:24875"/>
    </cofactor>
</comment>
<comment type="subunit">
    <text>Homotetramer.</text>
</comment>
<comment type="similarity">
    <text evidence="2">Belongs to the desulfoferrodoxin family.</text>
</comment>
<sequence length="124" mass="14324">MISETIRSGDWKGEKHVPVIEYEREGELVKVKVQVGKEIPHPNTTEHHIRYIELYFLPEGENFVYQVGRVEFTAHGESVNGPNTSDVYTEPIAYFVLKTKKKGKLYALSYCNIHGLWENEVTLE</sequence>
<dbReference type="EC" id="1.15.1.2"/>
<dbReference type="EMBL" id="AF156097">
    <property type="protein sequence ID" value="AAF03229.1"/>
    <property type="molecule type" value="Genomic_DNA"/>
</dbReference>
<dbReference type="EMBL" id="AE009950">
    <property type="protein sequence ID" value="AAL81405.1"/>
    <property type="molecule type" value="Genomic_DNA"/>
</dbReference>
<dbReference type="PIR" id="T44571">
    <property type="entry name" value="T44571"/>
</dbReference>
<dbReference type="RefSeq" id="WP_011012425.1">
    <property type="nucleotide sequence ID" value="NZ_CP023154.1"/>
</dbReference>
<dbReference type="PDB" id="1DO6">
    <property type="method" value="X-ray"/>
    <property type="resolution" value="2.00 A"/>
    <property type="chains" value="A/B=1-124"/>
</dbReference>
<dbReference type="PDB" id="1DQI">
    <property type="method" value="X-ray"/>
    <property type="resolution" value="1.70 A"/>
    <property type="chains" value="A/B/C/D=1-124"/>
</dbReference>
<dbReference type="PDB" id="1DQK">
    <property type="method" value="X-ray"/>
    <property type="resolution" value="2.00 A"/>
    <property type="chains" value="A/B/C/D=1-124"/>
</dbReference>
<dbReference type="PDBsum" id="1DO6"/>
<dbReference type="PDBsum" id="1DQI"/>
<dbReference type="PDBsum" id="1DQK"/>
<dbReference type="SMR" id="P82385"/>
<dbReference type="STRING" id="186497.PF1281"/>
<dbReference type="PaxDb" id="186497-PF1281"/>
<dbReference type="GeneID" id="41713085"/>
<dbReference type="KEGG" id="pfu:PF1281"/>
<dbReference type="PATRIC" id="fig|186497.12.peg.1344"/>
<dbReference type="eggNOG" id="arCOG02146">
    <property type="taxonomic scope" value="Archaea"/>
</dbReference>
<dbReference type="HOGENOM" id="CLU_118960_2_1_2"/>
<dbReference type="OrthoDB" id="30725at2157"/>
<dbReference type="PhylomeDB" id="P82385"/>
<dbReference type="BRENDA" id="1.15.1.2">
    <property type="organism ID" value="5243"/>
</dbReference>
<dbReference type="EvolutionaryTrace" id="P82385"/>
<dbReference type="Proteomes" id="UP000001013">
    <property type="component" value="Chromosome"/>
</dbReference>
<dbReference type="GO" id="GO:0005506">
    <property type="term" value="F:iron ion binding"/>
    <property type="evidence" value="ECO:0007669"/>
    <property type="project" value="InterPro"/>
</dbReference>
<dbReference type="GO" id="GO:0050605">
    <property type="term" value="F:superoxide reductase activity"/>
    <property type="evidence" value="ECO:0007669"/>
    <property type="project" value="UniProtKB-EC"/>
</dbReference>
<dbReference type="CDD" id="cd03172">
    <property type="entry name" value="SORL_classII"/>
    <property type="match status" value="1"/>
</dbReference>
<dbReference type="Gene3D" id="2.60.40.730">
    <property type="entry name" value="SOR catalytic domain"/>
    <property type="match status" value="1"/>
</dbReference>
<dbReference type="InterPro" id="IPR002742">
    <property type="entry name" value="Desulfoferrodoxin_Fe-bd_dom"/>
</dbReference>
<dbReference type="InterPro" id="IPR036073">
    <property type="entry name" value="Desulfoferrodoxin_Fe-bd_dom_sf"/>
</dbReference>
<dbReference type="InterPro" id="IPR051233">
    <property type="entry name" value="Desulfoferrodoxin_SOR"/>
</dbReference>
<dbReference type="NCBIfam" id="TIGR00332">
    <property type="entry name" value="neela_ferrous"/>
    <property type="match status" value="1"/>
</dbReference>
<dbReference type="PANTHER" id="PTHR36541">
    <property type="entry name" value="SUPEROXIDE REDUCTASE-RELATED"/>
    <property type="match status" value="1"/>
</dbReference>
<dbReference type="PANTHER" id="PTHR36541:SF1">
    <property type="entry name" value="SUPEROXIDE REDUCTASE-RELATED"/>
    <property type="match status" value="1"/>
</dbReference>
<dbReference type="Pfam" id="PF01880">
    <property type="entry name" value="Desulfoferrodox"/>
    <property type="match status" value="1"/>
</dbReference>
<dbReference type="SUPFAM" id="SSF49367">
    <property type="entry name" value="Superoxide reductase-like"/>
    <property type="match status" value="1"/>
</dbReference>
<accession>P82385</accession>
<proteinExistence type="evidence at protein level"/>
<name>SOR_PYRFU</name>
<feature type="chain" id="PRO_0000140873" description="Superoxide reductase">
    <location>
        <begin position="1"/>
        <end position="124"/>
    </location>
</feature>
<feature type="binding site">
    <location>
        <position position="14"/>
    </location>
    <ligand>
        <name>Fe cation</name>
        <dbReference type="ChEBI" id="CHEBI:24875"/>
    </ligand>
</feature>
<feature type="binding site">
    <location>
        <position position="16"/>
    </location>
    <ligand>
        <name>Fe cation</name>
        <dbReference type="ChEBI" id="CHEBI:24875"/>
    </ligand>
</feature>
<feature type="binding site">
    <location>
        <position position="41"/>
    </location>
    <ligand>
        <name>Fe cation</name>
        <dbReference type="ChEBI" id="CHEBI:24875"/>
    </ligand>
</feature>
<feature type="binding site">
    <location>
        <position position="47"/>
    </location>
    <ligand>
        <name>Fe cation</name>
        <dbReference type="ChEBI" id="CHEBI:24875"/>
    </ligand>
</feature>
<feature type="binding site">
    <location>
        <position position="111"/>
    </location>
    <ligand>
        <name>Fe cation</name>
        <dbReference type="ChEBI" id="CHEBI:24875"/>
    </ligand>
</feature>
<feature type="binding site">
    <location>
        <position position="114"/>
    </location>
    <ligand>
        <name>Fe cation</name>
        <dbReference type="ChEBI" id="CHEBI:24875"/>
    </ligand>
</feature>
<feature type="helix" evidence="3">
    <location>
        <begin position="2"/>
        <end position="5"/>
    </location>
</feature>
<feature type="turn" evidence="4">
    <location>
        <begin position="11"/>
        <end position="13"/>
    </location>
</feature>
<feature type="strand" evidence="3">
    <location>
        <begin position="19"/>
        <end position="25"/>
    </location>
</feature>
<feature type="strand" evidence="3">
    <location>
        <begin position="28"/>
        <end position="35"/>
    </location>
</feature>
<feature type="strand" evidence="3">
    <location>
        <begin position="37"/>
        <end position="39"/>
    </location>
</feature>
<feature type="strand" evidence="3">
    <location>
        <begin position="44"/>
        <end position="47"/>
    </location>
</feature>
<feature type="strand" evidence="3">
    <location>
        <begin position="49"/>
        <end position="58"/>
    </location>
</feature>
<feature type="strand" evidence="3">
    <location>
        <begin position="65"/>
        <end position="72"/>
    </location>
</feature>
<feature type="strand" evidence="3">
    <location>
        <begin position="91"/>
        <end position="98"/>
    </location>
</feature>
<feature type="strand" evidence="3">
    <location>
        <begin position="103"/>
        <end position="111"/>
    </location>
</feature>
<feature type="turn" evidence="3">
    <location>
        <begin position="112"/>
        <end position="114"/>
    </location>
</feature>
<feature type="strand" evidence="3">
    <location>
        <begin position="115"/>
        <end position="123"/>
    </location>
</feature>
<keyword id="KW-0002">3D-structure</keyword>
<keyword id="KW-0903">Direct protein sequencing</keyword>
<keyword id="KW-0249">Electron transport</keyword>
<keyword id="KW-0408">Iron</keyword>
<keyword id="KW-0479">Metal-binding</keyword>
<keyword id="KW-0560">Oxidoreductase</keyword>
<keyword id="KW-1185">Reference proteome</keyword>
<keyword id="KW-0813">Transport</keyword>
<reference key="1">
    <citation type="journal article" date="1999" name="Science">
        <title>Anaerobic microbes: oxygen detoxification without superoxide dismutase.</title>
        <authorList>
            <person name="Jenney F.E. Jr."/>
            <person name="Verhagen M.F.J.M."/>
            <person name="Cui X."/>
            <person name="Adams M.W.W."/>
        </authorList>
    </citation>
    <scope>NUCLEOTIDE SEQUENCE [GENOMIC DNA]</scope>
    <scope>PROTEIN SEQUENCE OF N-TERMINUS</scope>
    <scope>FUNCTION</scope>
    <scope>CATALYTIC ACTIVITY</scope>
    <scope>COFACTOR</scope>
    <source>
        <strain>ATCC 43587 / DSM 3638 / JCM 8422 / Vc1</strain>
    </source>
</reference>
<reference key="2">
    <citation type="journal article" date="1999" name="Genetics">
        <title>Divergence of the hyperthermophilic archaea Pyrococcus furiosus and P. horikoshii inferred from complete genomic sequences.</title>
        <authorList>
            <person name="Maeder D.L."/>
            <person name="Weiss R.B."/>
            <person name="Dunn D.M."/>
            <person name="Cherry J.L."/>
            <person name="Gonzalez J.M."/>
            <person name="DiRuggiero J."/>
            <person name="Robb F.T."/>
        </authorList>
    </citation>
    <scope>NUCLEOTIDE SEQUENCE [LARGE SCALE GENOMIC DNA]</scope>
    <source>
        <strain>ATCC 43587 / DSM 3638 / JCM 8422 / Vc1</strain>
    </source>
</reference>
<reference key="3">
    <citation type="journal article" date="2000" name="Biochemistry">
        <title>Structures of the superoxide reductase from Pyrococcus furiosus in the oxidized and reduced states.</title>
        <authorList>
            <person name="Yeh A.P."/>
            <person name="Hu Y."/>
            <person name="Jenney F.E. Jr."/>
            <person name="Adams M.W.W."/>
            <person name="Rees D.C."/>
        </authorList>
    </citation>
    <scope>X-RAY CRYSTALLOGRAPHY (1.7 ANGSTROMS)</scope>
</reference>
<gene>
    <name type="primary">sorA</name>
    <name type="ordered locus">PF1281</name>
</gene>